<evidence type="ECO:0000250" key="1">
    <source>
        <dbReference type="UniProtKB" id="A8NN94"/>
    </source>
</evidence>
<evidence type="ECO:0000269" key="2">
    <source>
    </source>
</evidence>
<evidence type="ECO:0000269" key="3">
    <source>
    </source>
</evidence>
<evidence type="ECO:0000269" key="4">
    <source>
    </source>
</evidence>
<evidence type="ECO:0000269" key="5">
    <source>
    </source>
</evidence>
<evidence type="ECO:0000303" key="6">
    <source>
    </source>
</evidence>
<evidence type="ECO:0000305" key="7"/>
<evidence type="ECO:0007744" key="8">
    <source>
        <dbReference type="PDB" id="3J7Y"/>
    </source>
</evidence>
<evidence type="ECO:0007744" key="9">
    <source>
        <dbReference type="PDB" id="3J9M"/>
    </source>
</evidence>
<evidence type="ECO:0007744" key="10">
    <source>
        <dbReference type="PDB" id="5OOL"/>
    </source>
</evidence>
<evidence type="ECO:0007744" key="11">
    <source>
        <dbReference type="PDB" id="5OOM"/>
    </source>
</evidence>
<evidence type="ECO:0007744" key="12">
    <source>
        <dbReference type="PDB" id="7QH6"/>
    </source>
</evidence>
<evidence type="ECO:0007744" key="13">
    <source>
        <dbReference type="PDB" id="7QH7"/>
    </source>
</evidence>
<evidence type="ECO:0007744" key="14">
    <source>
    </source>
</evidence>
<evidence type="ECO:0007829" key="15">
    <source>
        <dbReference type="PDB" id="7OF0"/>
    </source>
</evidence>
<protein>
    <recommendedName>
        <fullName evidence="6">Large ribosomal subunit protein bL34m</fullName>
    </recommendedName>
    <alternativeName>
        <fullName>39S ribosomal protein L34, mitochondrial</fullName>
        <shortName>L34mt</shortName>
        <shortName>MRP-L34</shortName>
    </alternativeName>
</protein>
<gene>
    <name type="primary">MRPL34</name>
</gene>
<organism>
    <name type="scientific">Homo sapiens</name>
    <name type="common">Human</name>
    <dbReference type="NCBI Taxonomy" id="9606"/>
    <lineage>
        <taxon>Eukaryota</taxon>
        <taxon>Metazoa</taxon>
        <taxon>Chordata</taxon>
        <taxon>Craniata</taxon>
        <taxon>Vertebrata</taxon>
        <taxon>Euteleostomi</taxon>
        <taxon>Mammalia</taxon>
        <taxon>Eutheria</taxon>
        <taxon>Euarchontoglires</taxon>
        <taxon>Primates</taxon>
        <taxon>Haplorrhini</taxon>
        <taxon>Catarrhini</taxon>
        <taxon>Hominidae</taxon>
        <taxon>Homo</taxon>
    </lineage>
</organism>
<name>RM34_HUMAN</name>
<sequence>MAVLAGSLLGPTSRSAALLGGRWLQPRAWLGFPDAWGLPTPQQARGKARGNEYQPSNIKRKNKHGWVRRLSTPAGVQVILRRMLKGRKSLSH</sequence>
<accession>Q9BQ48</accession>
<keyword id="KW-0002">3D-structure</keyword>
<keyword id="KW-0496">Mitochondrion</keyword>
<keyword id="KW-0597">Phosphoprotein</keyword>
<keyword id="KW-1267">Proteomics identification</keyword>
<keyword id="KW-1185">Reference proteome</keyword>
<keyword id="KW-0687">Ribonucleoprotein</keyword>
<keyword id="KW-0689">Ribosomal protein</keyword>
<keyword id="KW-0809">Transit peptide</keyword>
<reference key="1">
    <citation type="journal article" date="2001" name="J. Biol. Chem.">
        <title>Structural compensation for the deficit of rRNA with proteins in the mammalian mitochondrial ribosome. Systematic analysis of protein components of the large ribosomal subunit from mammalian mitochondria.</title>
        <authorList>
            <person name="Suzuki T."/>
            <person name="Terasaki M."/>
            <person name="Takemoto-Hori C."/>
            <person name="Hanada T."/>
            <person name="Ueda T."/>
            <person name="Wada A."/>
            <person name="Watanabe K."/>
        </authorList>
    </citation>
    <scope>NUCLEOTIDE SEQUENCE [MRNA]</scope>
</reference>
<reference key="2">
    <citation type="journal article" date="2004" name="Genome Res.">
        <title>The status, quality, and expansion of the NIH full-length cDNA project: the Mammalian Gene Collection (MGC).</title>
        <authorList>
            <consortium name="The MGC Project Team"/>
        </authorList>
    </citation>
    <scope>NUCLEOTIDE SEQUENCE [LARGE SCALE MRNA]</scope>
    <source>
        <tissue>Colon</tissue>
        <tissue>Placenta</tissue>
    </source>
</reference>
<reference key="3">
    <citation type="journal article" date="2011" name="BMC Syst. Biol.">
        <title>Initial characterization of the human central proteome.</title>
        <authorList>
            <person name="Burkard T.R."/>
            <person name="Planyavsky M."/>
            <person name="Kaupe I."/>
            <person name="Breitwieser F.P."/>
            <person name="Buerckstuemmer T."/>
            <person name="Bennett K.L."/>
            <person name="Superti-Furga G."/>
            <person name="Colinge J."/>
        </authorList>
    </citation>
    <scope>IDENTIFICATION BY MASS SPECTROMETRY [LARGE SCALE ANALYSIS]</scope>
</reference>
<reference key="4">
    <citation type="journal article" date="2013" name="J. Proteome Res.">
        <title>Toward a comprehensive characterization of a human cancer cell phosphoproteome.</title>
        <authorList>
            <person name="Zhou H."/>
            <person name="Di Palma S."/>
            <person name="Preisinger C."/>
            <person name="Peng M."/>
            <person name="Polat A.N."/>
            <person name="Heck A.J."/>
            <person name="Mohammed S."/>
        </authorList>
    </citation>
    <scope>PHOSPHORYLATION [LARGE SCALE ANALYSIS] AT SER-71</scope>
    <scope>IDENTIFICATION BY MASS SPECTROMETRY [LARGE SCALE ANALYSIS]</scope>
    <source>
        <tissue>Cervix carcinoma</tissue>
    </source>
</reference>
<reference key="5">
    <citation type="journal article" date="2015" name="Proteomics">
        <title>N-terminome analysis of the human mitochondrial proteome.</title>
        <authorList>
            <person name="Vaca Jacome A.S."/>
            <person name="Rabilloud T."/>
            <person name="Schaeffer-Reiss C."/>
            <person name="Rompais M."/>
            <person name="Ayoub D."/>
            <person name="Lane L."/>
            <person name="Bairoch A."/>
            <person name="Van Dorsselaer A."/>
            <person name="Carapito C."/>
        </authorList>
    </citation>
    <scope>IDENTIFICATION BY MASS SPECTROMETRY [LARGE SCALE ANALYSIS]</scope>
</reference>
<reference evidence="8" key="6">
    <citation type="journal article" date="2014" name="Science">
        <title>Structure of the large ribosomal subunit from human mitochondria.</title>
        <authorList>
            <person name="Brown A."/>
            <person name="Amunts A."/>
            <person name="Bai X.C."/>
            <person name="Sugimoto Y."/>
            <person name="Edwards P.C."/>
            <person name="Murshudov G."/>
            <person name="Scheres S.H."/>
            <person name="Ramakrishnan V."/>
        </authorList>
    </citation>
    <scope>STRUCTURE BY ELECTRON MICROSCOPY (3.40 ANGSTROMS)</scope>
    <scope>SUBCELLULAR LOCATION</scope>
    <scope>SUBUNIT</scope>
</reference>
<reference evidence="9" key="7">
    <citation type="journal article" date="2015" name="Science">
        <title>Ribosome. The structure of the human mitochondrial ribosome.</title>
        <authorList>
            <person name="Amunts A."/>
            <person name="Brown A."/>
            <person name="Toots J."/>
            <person name="Scheres S.H."/>
            <person name="Ramakrishnan V."/>
        </authorList>
    </citation>
    <scope>STRUCTURE BY ELECTRON MICROSCOPY (3.50 ANGSTROMS)</scope>
    <scope>SUBCELLULAR LOCATION</scope>
    <scope>SUBUNIT</scope>
</reference>
<reference evidence="10 11" key="8">
    <citation type="journal article" date="2017" name="Nat. Struct. Mol. Biol.">
        <title>Structures of the human mitochondrial ribosome in native states of assembly.</title>
        <authorList>
            <person name="Brown A."/>
            <person name="Rathore S."/>
            <person name="Kimanius D."/>
            <person name="Aibara S."/>
            <person name="Bai X.C."/>
            <person name="Rorbach J."/>
            <person name="Amunts A."/>
            <person name="Ramakrishnan V."/>
        </authorList>
    </citation>
    <scope>STRUCTURE BY ELECTRON MICROSCOPY (3.03 ANGSTROMS)</scope>
    <scope>SUBCELLULAR LOCATION</scope>
    <scope>SUBUNIT</scope>
</reference>
<reference evidence="12 13" key="9">
    <citation type="journal article" date="2022" name="Nat. Commun.">
        <title>A late-stage assembly checkpoint of the human mitochondrial ribosome large subunit.</title>
        <authorList>
            <person name="Rebelo-Guiomar P."/>
            <person name="Pellegrino S."/>
            <person name="Dent K.C."/>
            <person name="Sas-Chen A."/>
            <person name="Miller-Fleming L."/>
            <person name="Garone C."/>
            <person name="Van Haute L."/>
            <person name="Rogan J.F."/>
            <person name="Dinan A."/>
            <person name="Firth A.E."/>
            <person name="Andrews B."/>
            <person name="Whitworth A.J."/>
            <person name="Schwartz S."/>
            <person name="Warren A.J."/>
            <person name="Minczuk M."/>
        </authorList>
    </citation>
    <scope>STRUCTURE BY ELECTRON MICROSCOPY (2.9 ANGSTROMS) IN COMPLEX WITH MTLSU</scope>
    <scope>SUBUNIT</scope>
</reference>
<proteinExistence type="evidence at protein level"/>
<feature type="transit peptide" description="Mitochondrion" evidence="1">
    <location>
        <begin position="1"/>
        <end position="46"/>
    </location>
</feature>
<feature type="chain" id="PRO_0000030520" description="Large ribosomal subunit protein bL34m">
    <location>
        <begin position="47"/>
        <end position="92"/>
    </location>
</feature>
<feature type="modified residue" description="Phosphoserine" evidence="14">
    <location>
        <position position="71"/>
    </location>
</feature>
<feature type="helix" evidence="15">
    <location>
        <begin position="57"/>
        <end position="64"/>
    </location>
</feature>
<feature type="helix" evidence="15">
    <location>
        <begin position="66"/>
        <end position="70"/>
    </location>
</feature>
<feature type="helix" evidence="15">
    <location>
        <begin position="73"/>
        <end position="85"/>
    </location>
</feature>
<comment type="subunit">
    <text evidence="2 3 4 5">Component of the mitochondrial large ribosomal subunit (mt-LSU) (PubMed:25278503, PubMed:25838379, PubMed:28892042, PubMed:35177605). Mature mammalian 55S mitochondrial ribosomes consist of a small (28S) and a large (39S) subunit. The 28S small subunit contains a 12S ribosomal RNA (12S mt-rRNA) and 30 different proteins. The 39S large subunit contains a 16S rRNA (16S mt-rRNA), a copy of mitochondrial valine transfer RNA (mt-tRNA(Val)), which plays an integral structural role, and 52 different proteins.</text>
</comment>
<comment type="subcellular location">
    <subcellularLocation>
        <location evidence="2 3 4">Mitochondrion</location>
    </subcellularLocation>
</comment>
<comment type="similarity">
    <text evidence="7">Belongs to the bacterial ribosomal protein bL34 family.</text>
</comment>
<dbReference type="EMBL" id="AB049652">
    <property type="protein sequence ID" value="BAB40857.1"/>
    <property type="molecule type" value="mRNA"/>
</dbReference>
<dbReference type="EMBL" id="BC000071">
    <property type="protein sequence ID" value="AAH00071.1"/>
    <property type="molecule type" value="mRNA"/>
</dbReference>
<dbReference type="EMBL" id="BC021801">
    <property type="protein sequence ID" value="AAH21801.1"/>
    <property type="molecule type" value="mRNA"/>
</dbReference>
<dbReference type="CCDS" id="CCDS12356.1"/>
<dbReference type="RefSeq" id="NP_001369271.1">
    <property type="nucleotide sequence ID" value="NM_001382342.1"/>
</dbReference>
<dbReference type="RefSeq" id="NP_001369272.1">
    <property type="nucleotide sequence ID" value="NM_001382343.1"/>
</dbReference>
<dbReference type="RefSeq" id="NP_001387001.1">
    <property type="nucleotide sequence ID" value="NM_001400072.1"/>
</dbReference>
<dbReference type="RefSeq" id="NP_001387002.1">
    <property type="nucleotide sequence ID" value="NM_001400073.1"/>
</dbReference>
<dbReference type="RefSeq" id="NP_076426.1">
    <property type="nucleotide sequence ID" value="NM_023937.4"/>
</dbReference>
<dbReference type="RefSeq" id="XP_011526491.1">
    <property type="nucleotide sequence ID" value="XM_011528189.2"/>
</dbReference>
<dbReference type="PDB" id="3J7Y">
    <property type="method" value="EM"/>
    <property type="resolution" value="3.40 A"/>
    <property type="chains" value="2=1-92"/>
</dbReference>
<dbReference type="PDB" id="3J9M">
    <property type="method" value="EM"/>
    <property type="resolution" value="3.50 A"/>
    <property type="chains" value="2=1-92"/>
</dbReference>
<dbReference type="PDB" id="5OOL">
    <property type="method" value="EM"/>
    <property type="resolution" value="3.06 A"/>
    <property type="chains" value="2=1-92"/>
</dbReference>
<dbReference type="PDB" id="5OOM">
    <property type="method" value="EM"/>
    <property type="resolution" value="3.03 A"/>
    <property type="chains" value="2=1-92"/>
</dbReference>
<dbReference type="PDB" id="6I9R">
    <property type="method" value="EM"/>
    <property type="resolution" value="3.90 A"/>
    <property type="chains" value="2=1-92"/>
</dbReference>
<dbReference type="PDB" id="6NU2">
    <property type="method" value="EM"/>
    <property type="resolution" value="3.90 A"/>
    <property type="chains" value="2=47-92"/>
</dbReference>
<dbReference type="PDB" id="6NU3">
    <property type="method" value="EM"/>
    <property type="resolution" value="4.40 A"/>
    <property type="chains" value="2=1-92"/>
</dbReference>
<dbReference type="PDB" id="6VLZ">
    <property type="method" value="EM"/>
    <property type="resolution" value="2.97 A"/>
    <property type="chains" value="2=1-92"/>
</dbReference>
<dbReference type="PDB" id="6VMI">
    <property type="method" value="EM"/>
    <property type="resolution" value="2.96 A"/>
    <property type="chains" value="2=1-92"/>
</dbReference>
<dbReference type="PDB" id="6ZM5">
    <property type="method" value="EM"/>
    <property type="resolution" value="2.89 A"/>
    <property type="chains" value="2=1-92"/>
</dbReference>
<dbReference type="PDB" id="6ZM6">
    <property type="method" value="EM"/>
    <property type="resolution" value="2.59 A"/>
    <property type="chains" value="2=1-92"/>
</dbReference>
<dbReference type="PDB" id="6ZS9">
    <property type="method" value="EM"/>
    <property type="resolution" value="4.00 A"/>
    <property type="chains" value="2=1-92"/>
</dbReference>
<dbReference type="PDB" id="6ZSA">
    <property type="method" value="EM"/>
    <property type="resolution" value="4.00 A"/>
    <property type="chains" value="2=1-92"/>
</dbReference>
<dbReference type="PDB" id="6ZSB">
    <property type="method" value="EM"/>
    <property type="resolution" value="4.50 A"/>
    <property type="chains" value="2=1-92"/>
</dbReference>
<dbReference type="PDB" id="6ZSC">
    <property type="method" value="EM"/>
    <property type="resolution" value="3.50 A"/>
    <property type="chains" value="2=1-92"/>
</dbReference>
<dbReference type="PDB" id="6ZSD">
    <property type="method" value="EM"/>
    <property type="resolution" value="3.70 A"/>
    <property type="chains" value="2=1-92"/>
</dbReference>
<dbReference type="PDB" id="6ZSE">
    <property type="method" value="EM"/>
    <property type="resolution" value="5.00 A"/>
    <property type="chains" value="2=1-92"/>
</dbReference>
<dbReference type="PDB" id="6ZSG">
    <property type="method" value="EM"/>
    <property type="resolution" value="4.00 A"/>
    <property type="chains" value="2=1-92"/>
</dbReference>
<dbReference type="PDB" id="7A5F">
    <property type="method" value="EM"/>
    <property type="resolution" value="4.40 A"/>
    <property type="chains" value="23=1-92"/>
</dbReference>
<dbReference type="PDB" id="7A5G">
    <property type="method" value="EM"/>
    <property type="resolution" value="4.33 A"/>
    <property type="chains" value="23=1-92"/>
</dbReference>
<dbReference type="PDB" id="7A5H">
    <property type="method" value="EM"/>
    <property type="resolution" value="3.30 A"/>
    <property type="chains" value="2=1-92"/>
</dbReference>
<dbReference type="PDB" id="7A5I">
    <property type="method" value="EM"/>
    <property type="resolution" value="3.70 A"/>
    <property type="chains" value="23=1-92"/>
</dbReference>
<dbReference type="PDB" id="7A5J">
    <property type="method" value="EM"/>
    <property type="resolution" value="3.10 A"/>
    <property type="chains" value="2=1-92"/>
</dbReference>
<dbReference type="PDB" id="7A5K">
    <property type="method" value="EM"/>
    <property type="resolution" value="3.70 A"/>
    <property type="chains" value="23=1-92"/>
</dbReference>
<dbReference type="PDB" id="7L08">
    <property type="method" value="EM"/>
    <property type="resolution" value="3.49 A"/>
    <property type="chains" value="2=1-92"/>
</dbReference>
<dbReference type="PDB" id="7L20">
    <property type="method" value="EM"/>
    <property type="resolution" value="3.15 A"/>
    <property type="chains" value="2=1-92"/>
</dbReference>
<dbReference type="PDB" id="7O9K">
    <property type="method" value="EM"/>
    <property type="resolution" value="3.10 A"/>
    <property type="chains" value="2=1-92"/>
</dbReference>
<dbReference type="PDB" id="7O9M">
    <property type="method" value="EM"/>
    <property type="resolution" value="2.50 A"/>
    <property type="chains" value="2=1-92"/>
</dbReference>
<dbReference type="PDB" id="7ODR">
    <property type="method" value="EM"/>
    <property type="resolution" value="2.90 A"/>
    <property type="chains" value="2=1-92"/>
</dbReference>
<dbReference type="PDB" id="7ODS">
    <property type="method" value="EM"/>
    <property type="resolution" value="3.10 A"/>
    <property type="chains" value="2=1-92"/>
</dbReference>
<dbReference type="PDB" id="7ODT">
    <property type="method" value="EM"/>
    <property type="resolution" value="3.10 A"/>
    <property type="chains" value="2=1-92"/>
</dbReference>
<dbReference type="PDB" id="7OF0">
    <property type="method" value="EM"/>
    <property type="resolution" value="2.20 A"/>
    <property type="chains" value="2=1-92"/>
</dbReference>
<dbReference type="PDB" id="7OF2">
    <property type="method" value="EM"/>
    <property type="resolution" value="2.70 A"/>
    <property type="chains" value="2=1-92"/>
</dbReference>
<dbReference type="PDB" id="7OF3">
    <property type="method" value="EM"/>
    <property type="resolution" value="2.70 A"/>
    <property type="chains" value="2=1-92"/>
</dbReference>
<dbReference type="PDB" id="7OF4">
    <property type="method" value="EM"/>
    <property type="resolution" value="2.70 A"/>
    <property type="chains" value="2=1-92"/>
</dbReference>
<dbReference type="PDB" id="7OF5">
    <property type="method" value="EM"/>
    <property type="resolution" value="2.90 A"/>
    <property type="chains" value="2=1-92"/>
</dbReference>
<dbReference type="PDB" id="7OF6">
    <property type="method" value="EM"/>
    <property type="resolution" value="2.60 A"/>
    <property type="chains" value="2=1-92"/>
</dbReference>
<dbReference type="PDB" id="7OF7">
    <property type="method" value="EM"/>
    <property type="resolution" value="2.50 A"/>
    <property type="chains" value="2=1-92"/>
</dbReference>
<dbReference type="PDB" id="7OG4">
    <property type="method" value="EM"/>
    <property type="resolution" value="3.80 A"/>
    <property type="chains" value="2=1-92"/>
</dbReference>
<dbReference type="PDB" id="7OI6">
    <property type="method" value="EM"/>
    <property type="resolution" value="5.70 A"/>
    <property type="chains" value="2=1-92"/>
</dbReference>
<dbReference type="PDB" id="7OI7">
    <property type="method" value="EM"/>
    <property type="resolution" value="3.50 A"/>
    <property type="chains" value="2=1-92"/>
</dbReference>
<dbReference type="PDB" id="7OI8">
    <property type="method" value="EM"/>
    <property type="resolution" value="3.50 A"/>
    <property type="chains" value="2=1-92"/>
</dbReference>
<dbReference type="PDB" id="7OI9">
    <property type="method" value="EM"/>
    <property type="resolution" value="3.30 A"/>
    <property type="chains" value="2=1-92"/>
</dbReference>
<dbReference type="PDB" id="7OIA">
    <property type="method" value="EM"/>
    <property type="resolution" value="3.20 A"/>
    <property type="chains" value="2=1-92"/>
</dbReference>
<dbReference type="PDB" id="7OIB">
    <property type="method" value="EM"/>
    <property type="resolution" value="3.30 A"/>
    <property type="chains" value="2=1-92"/>
</dbReference>
<dbReference type="PDB" id="7OIC">
    <property type="method" value="EM"/>
    <property type="resolution" value="3.10 A"/>
    <property type="chains" value="2=1-92"/>
</dbReference>
<dbReference type="PDB" id="7OID">
    <property type="method" value="EM"/>
    <property type="resolution" value="3.70 A"/>
    <property type="chains" value="2=1-92"/>
</dbReference>
<dbReference type="PDB" id="7OIE">
    <property type="method" value="EM"/>
    <property type="resolution" value="3.50 A"/>
    <property type="chains" value="2=1-92"/>
</dbReference>
<dbReference type="PDB" id="7PD3">
    <property type="method" value="EM"/>
    <property type="resolution" value="3.40 A"/>
    <property type="chains" value="2=1-92"/>
</dbReference>
<dbReference type="PDB" id="7PO4">
    <property type="method" value="EM"/>
    <property type="resolution" value="2.56 A"/>
    <property type="chains" value="2=1-92"/>
</dbReference>
<dbReference type="PDB" id="7QH6">
    <property type="method" value="EM"/>
    <property type="resolution" value="3.08 A"/>
    <property type="chains" value="2=1-92"/>
</dbReference>
<dbReference type="PDB" id="7QH7">
    <property type="method" value="EM"/>
    <property type="resolution" value="2.89 A"/>
    <property type="chains" value="2=48-92"/>
</dbReference>
<dbReference type="PDB" id="7QI4">
    <property type="method" value="EM"/>
    <property type="resolution" value="2.21 A"/>
    <property type="chains" value="2=1-92"/>
</dbReference>
<dbReference type="PDB" id="7QI5">
    <property type="method" value="EM"/>
    <property type="resolution" value="2.63 A"/>
    <property type="chains" value="2=1-92"/>
</dbReference>
<dbReference type="PDB" id="7QI6">
    <property type="method" value="EM"/>
    <property type="resolution" value="2.98 A"/>
    <property type="chains" value="2=1-92"/>
</dbReference>
<dbReference type="PDB" id="8ANY">
    <property type="method" value="EM"/>
    <property type="resolution" value="2.85 A"/>
    <property type="chains" value="2=1-92"/>
</dbReference>
<dbReference type="PDB" id="8K2A">
    <property type="method" value="EM"/>
    <property type="resolution" value="2.90 A"/>
    <property type="chains" value="Lh=1-92"/>
</dbReference>
<dbReference type="PDB" id="8K2B">
    <property type="method" value="EM"/>
    <property type="resolution" value="3.40 A"/>
    <property type="chains" value="Lh=1-92"/>
</dbReference>
<dbReference type="PDB" id="8OIR">
    <property type="method" value="EM"/>
    <property type="resolution" value="3.10 A"/>
    <property type="chains" value="BJ=1-92"/>
</dbReference>
<dbReference type="PDB" id="8OIT">
    <property type="method" value="EM"/>
    <property type="resolution" value="2.90 A"/>
    <property type="chains" value="BJ=1-92"/>
</dbReference>
<dbReference type="PDB" id="8PK0">
    <property type="method" value="EM"/>
    <property type="resolution" value="3.03 A"/>
    <property type="chains" value="2=1-92"/>
</dbReference>
<dbReference type="PDB" id="8QSJ">
    <property type="method" value="EM"/>
    <property type="resolution" value="3.00 A"/>
    <property type="chains" value="2=1-92"/>
</dbReference>
<dbReference type="PDB" id="8QU1">
    <property type="method" value="EM"/>
    <property type="resolution" value="2.74 A"/>
    <property type="chains" value="2=1-92"/>
</dbReference>
<dbReference type="PDB" id="8QU5">
    <property type="method" value="EM"/>
    <property type="resolution" value="2.42 A"/>
    <property type="chains" value="2=1-92"/>
</dbReference>
<dbReference type="PDB" id="8RRI">
    <property type="method" value="EM"/>
    <property type="resolution" value="2.40 A"/>
    <property type="chains" value="2=1-92"/>
</dbReference>
<dbReference type="PDB" id="8XT0">
    <property type="method" value="EM"/>
    <property type="resolution" value="3.20 A"/>
    <property type="chains" value="Lh=1-92"/>
</dbReference>
<dbReference type="PDB" id="8XT1">
    <property type="method" value="EM"/>
    <property type="resolution" value="3.10 A"/>
    <property type="chains" value="Lh=1-92"/>
</dbReference>
<dbReference type="PDB" id="8XT2">
    <property type="method" value="EM"/>
    <property type="resolution" value="3.30 A"/>
    <property type="chains" value="Lh=1-92"/>
</dbReference>
<dbReference type="PDB" id="8XT3">
    <property type="method" value="EM"/>
    <property type="resolution" value="3.10 A"/>
    <property type="chains" value="Lh=1-92"/>
</dbReference>
<dbReference type="PDBsum" id="3J7Y"/>
<dbReference type="PDBsum" id="3J9M"/>
<dbReference type="PDBsum" id="5OOL"/>
<dbReference type="PDBsum" id="5OOM"/>
<dbReference type="PDBsum" id="6I9R"/>
<dbReference type="PDBsum" id="6NU2"/>
<dbReference type="PDBsum" id="6NU3"/>
<dbReference type="PDBsum" id="6VLZ"/>
<dbReference type="PDBsum" id="6VMI"/>
<dbReference type="PDBsum" id="6ZM5"/>
<dbReference type="PDBsum" id="6ZM6"/>
<dbReference type="PDBsum" id="6ZS9"/>
<dbReference type="PDBsum" id="6ZSA"/>
<dbReference type="PDBsum" id="6ZSB"/>
<dbReference type="PDBsum" id="6ZSC"/>
<dbReference type="PDBsum" id="6ZSD"/>
<dbReference type="PDBsum" id="6ZSE"/>
<dbReference type="PDBsum" id="6ZSG"/>
<dbReference type="PDBsum" id="7A5F"/>
<dbReference type="PDBsum" id="7A5G"/>
<dbReference type="PDBsum" id="7A5H"/>
<dbReference type="PDBsum" id="7A5I"/>
<dbReference type="PDBsum" id="7A5J"/>
<dbReference type="PDBsum" id="7A5K"/>
<dbReference type="PDBsum" id="7L08"/>
<dbReference type="PDBsum" id="7L20"/>
<dbReference type="PDBsum" id="7O9K"/>
<dbReference type="PDBsum" id="7O9M"/>
<dbReference type="PDBsum" id="7ODR"/>
<dbReference type="PDBsum" id="7ODS"/>
<dbReference type="PDBsum" id="7ODT"/>
<dbReference type="PDBsum" id="7OF0"/>
<dbReference type="PDBsum" id="7OF2"/>
<dbReference type="PDBsum" id="7OF3"/>
<dbReference type="PDBsum" id="7OF4"/>
<dbReference type="PDBsum" id="7OF5"/>
<dbReference type="PDBsum" id="7OF6"/>
<dbReference type="PDBsum" id="7OF7"/>
<dbReference type="PDBsum" id="7OG4"/>
<dbReference type="PDBsum" id="7OI6"/>
<dbReference type="PDBsum" id="7OI7"/>
<dbReference type="PDBsum" id="7OI8"/>
<dbReference type="PDBsum" id="7OI9"/>
<dbReference type="PDBsum" id="7OIA"/>
<dbReference type="PDBsum" id="7OIB"/>
<dbReference type="PDBsum" id="7OIC"/>
<dbReference type="PDBsum" id="7OID"/>
<dbReference type="PDBsum" id="7OIE"/>
<dbReference type="PDBsum" id="7PD3"/>
<dbReference type="PDBsum" id="7PO4"/>
<dbReference type="PDBsum" id="7QH6"/>
<dbReference type="PDBsum" id="7QH7"/>
<dbReference type="PDBsum" id="7QI4"/>
<dbReference type="PDBsum" id="7QI5"/>
<dbReference type="PDBsum" id="7QI6"/>
<dbReference type="PDBsum" id="8ANY"/>
<dbReference type="PDBsum" id="8K2A"/>
<dbReference type="PDBsum" id="8K2B"/>
<dbReference type="PDBsum" id="8OIR"/>
<dbReference type="PDBsum" id="8OIT"/>
<dbReference type="PDBsum" id="8PK0"/>
<dbReference type="PDBsum" id="8QSJ"/>
<dbReference type="PDBsum" id="8QU1"/>
<dbReference type="PDBsum" id="8QU5"/>
<dbReference type="PDBsum" id="8RRI"/>
<dbReference type="PDBsum" id="8XT0"/>
<dbReference type="PDBsum" id="8XT1"/>
<dbReference type="PDBsum" id="8XT2"/>
<dbReference type="PDBsum" id="8XT3"/>
<dbReference type="EMDB" id="EMD-0514"/>
<dbReference type="EMDB" id="EMD-0515"/>
<dbReference type="EMDB" id="EMD-11278"/>
<dbReference type="EMDB" id="EMD-11279"/>
<dbReference type="EMDB" id="EMD-11390"/>
<dbReference type="EMDB" id="EMD-11391"/>
<dbReference type="EMDB" id="EMD-11392"/>
<dbReference type="EMDB" id="EMD-11393"/>
<dbReference type="EMDB" id="EMD-11394"/>
<dbReference type="EMDB" id="EMD-11395"/>
<dbReference type="EMDB" id="EMD-11397"/>
<dbReference type="EMDB" id="EMD-11641"/>
<dbReference type="EMDB" id="EMD-11642"/>
<dbReference type="EMDB" id="EMD-11643"/>
<dbReference type="EMDB" id="EMD-11644"/>
<dbReference type="EMDB" id="EMD-11645"/>
<dbReference type="EMDB" id="EMD-11646"/>
<dbReference type="EMDB" id="EMD-12763"/>
<dbReference type="EMDB" id="EMD-12764"/>
<dbReference type="EMDB" id="EMD-12845"/>
<dbReference type="EMDB" id="EMD-12846"/>
<dbReference type="EMDB" id="EMD-12847"/>
<dbReference type="EMDB" id="EMD-12865"/>
<dbReference type="EMDB" id="EMD-12867"/>
<dbReference type="EMDB" id="EMD-12868"/>
<dbReference type="EMDB" id="EMD-12869"/>
<dbReference type="EMDB" id="EMD-12870"/>
<dbReference type="EMDB" id="EMD-12871"/>
<dbReference type="EMDB" id="EMD-12872"/>
<dbReference type="EMDB" id="EMD-12877"/>
<dbReference type="EMDB" id="EMD-12919"/>
<dbReference type="EMDB" id="EMD-12920"/>
<dbReference type="EMDB" id="EMD-12921"/>
<dbReference type="EMDB" id="EMD-12922"/>
<dbReference type="EMDB" id="EMD-12923"/>
<dbReference type="EMDB" id="EMD-12924"/>
<dbReference type="EMDB" id="EMD-12925"/>
<dbReference type="EMDB" id="EMD-12926"/>
<dbReference type="EMDB" id="EMD-12927"/>
<dbReference type="EMDB" id="EMD-13329"/>
<dbReference type="EMDB" id="EMD-13562"/>
<dbReference type="EMDB" id="EMD-13965"/>
<dbReference type="EMDB" id="EMD-13967"/>
<dbReference type="EMDB" id="EMD-13980"/>
<dbReference type="EMDB" id="EMD-13981"/>
<dbReference type="EMDB" id="EMD-13982"/>
<dbReference type="EMDB" id="EMD-15544"/>
<dbReference type="EMDB" id="EMD-16897"/>
<dbReference type="EMDB" id="EMD-16899"/>
<dbReference type="EMDB" id="EMD-17719"/>
<dbReference type="EMDB" id="EMD-19460"/>
<dbReference type="EMDB" id="EMD-21233"/>
<dbReference type="EMDB" id="EMD-21242"/>
<dbReference type="EMDB" id="EMD-23096"/>
<dbReference type="EMDB" id="EMD-23121"/>
<dbReference type="EMDB" id="EMD-36836"/>
<dbReference type="EMDB" id="EMD-36837"/>
<dbReference type="EMDB" id="EMD-3842"/>
<dbReference type="EMDB" id="EMD-3843"/>
<dbReference type="EMDB" id="EMD-38632"/>
<dbReference type="EMDB" id="EMD-38633"/>
<dbReference type="EMDB" id="EMD-38634"/>
<dbReference type="EMDB" id="EMD-38635"/>
<dbReference type="EMDB" id="EMD-4434"/>
<dbReference type="SMR" id="Q9BQ48"/>
<dbReference type="BioGRID" id="122367">
    <property type="interactions" value="62"/>
</dbReference>
<dbReference type="ComplexPortal" id="CPX-5226">
    <property type="entry name" value="39S mitochondrial large ribosomal subunit"/>
</dbReference>
<dbReference type="CORUM" id="Q9BQ48"/>
<dbReference type="FunCoup" id="Q9BQ48">
    <property type="interactions" value="429"/>
</dbReference>
<dbReference type="IntAct" id="Q9BQ48">
    <property type="interactions" value="48"/>
</dbReference>
<dbReference type="MINT" id="Q9BQ48"/>
<dbReference type="STRING" id="9606.ENSP00000252602"/>
<dbReference type="iPTMnet" id="Q9BQ48"/>
<dbReference type="PhosphoSitePlus" id="Q9BQ48"/>
<dbReference type="BioMuta" id="MRPL34"/>
<dbReference type="DMDM" id="20139691"/>
<dbReference type="jPOST" id="Q9BQ48"/>
<dbReference type="MassIVE" id="Q9BQ48"/>
<dbReference type="PaxDb" id="9606-ENSP00000252602"/>
<dbReference type="PeptideAtlas" id="Q9BQ48"/>
<dbReference type="ProteomicsDB" id="78620"/>
<dbReference type="Pumba" id="Q9BQ48"/>
<dbReference type="TopDownProteomics" id="Q9BQ48"/>
<dbReference type="Antibodypedia" id="43756">
    <property type="antibodies" value="80 antibodies from 21 providers"/>
</dbReference>
<dbReference type="DNASU" id="64981"/>
<dbReference type="Ensembl" id="ENST00000252602.2">
    <property type="protein sequence ID" value="ENSP00000252602.1"/>
    <property type="gene ID" value="ENSG00000130312.7"/>
</dbReference>
<dbReference type="Ensembl" id="ENST00000594999.1">
    <property type="protein sequence ID" value="ENSP00000471820.1"/>
    <property type="gene ID" value="ENSG00000130312.7"/>
</dbReference>
<dbReference type="Ensembl" id="ENST00000600434.5">
    <property type="protein sequence ID" value="ENSP00000469581.1"/>
    <property type="gene ID" value="ENSG00000130312.7"/>
</dbReference>
<dbReference type="GeneID" id="64981"/>
<dbReference type="KEGG" id="hsa:64981"/>
<dbReference type="MANE-Select" id="ENST00000252602.2">
    <property type="protein sequence ID" value="ENSP00000252602.1"/>
    <property type="RefSeq nucleotide sequence ID" value="NM_023937.4"/>
    <property type="RefSeq protein sequence ID" value="NP_076426.1"/>
</dbReference>
<dbReference type="UCSC" id="uc002ngc.1">
    <property type="organism name" value="human"/>
</dbReference>
<dbReference type="AGR" id="HGNC:14488"/>
<dbReference type="CTD" id="64981"/>
<dbReference type="GeneCards" id="MRPL34"/>
<dbReference type="HGNC" id="HGNC:14488">
    <property type="gene designation" value="MRPL34"/>
</dbReference>
<dbReference type="HPA" id="ENSG00000130312">
    <property type="expression patterns" value="Low tissue specificity"/>
</dbReference>
<dbReference type="MIM" id="611840">
    <property type="type" value="gene"/>
</dbReference>
<dbReference type="neXtProt" id="NX_Q9BQ48"/>
<dbReference type="OpenTargets" id="ENSG00000130312"/>
<dbReference type="PharmGKB" id="PA30965"/>
<dbReference type="VEuPathDB" id="HostDB:ENSG00000130312"/>
<dbReference type="eggNOG" id="KOG4612">
    <property type="taxonomic scope" value="Eukaryota"/>
</dbReference>
<dbReference type="GeneTree" id="ENSGT00390000012240"/>
<dbReference type="HOGENOM" id="CLU_2372198_0_0_1"/>
<dbReference type="InParanoid" id="Q9BQ48"/>
<dbReference type="OMA" id="LQPRVWM"/>
<dbReference type="OrthoDB" id="431691at2759"/>
<dbReference type="PAN-GO" id="Q9BQ48">
    <property type="GO annotations" value="1 GO annotation based on evolutionary models"/>
</dbReference>
<dbReference type="PhylomeDB" id="Q9BQ48"/>
<dbReference type="TreeFam" id="TF324478"/>
<dbReference type="PathwayCommons" id="Q9BQ48"/>
<dbReference type="Reactome" id="R-HSA-5368286">
    <property type="pathway name" value="Mitochondrial translation initiation"/>
</dbReference>
<dbReference type="Reactome" id="R-HSA-5389840">
    <property type="pathway name" value="Mitochondrial translation elongation"/>
</dbReference>
<dbReference type="Reactome" id="R-HSA-5419276">
    <property type="pathway name" value="Mitochondrial translation termination"/>
</dbReference>
<dbReference type="SignaLink" id="Q9BQ48"/>
<dbReference type="SIGNOR" id="Q9BQ48"/>
<dbReference type="BioGRID-ORCS" id="64981">
    <property type="hits" value="701 hits in 1171 CRISPR screens"/>
</dbReference>
<dbReference type="ChiTaRS" id="MRPL34">
    <property type="organism name" value="human"/>
</dbReference>
<dbReference type="EvolutionaryTrace" id="Q9BQ48"/>
<dbReference type="GenomeRNAi" id="64981"/>
<dbReference type="Pharos" id="Q9BQ48">
    <property type="development level" value="Tdark"/>
</dbReference>
<dbReference type="PRO" id="PR:Q9BQ48"/>
<dbReference type="Proteomes" id="UP000005640">
    <property type="component" value="Chromosome 19"/>
</dbReference>
<dbReference type="RNAct" id="Q9BQ48">
    <property type="molecule type" value="protein"/>
</dbReference>
<dbReference type="Bgee" id="ENSG00000130312">
    <property type="expression patterns" value="Expressed in mucosa of transverse colon and 184 other cell types or tissues"/>
</dbReference>
<dbReference type="ExpressionAtlas" id="Q9BQ48">
    <property type="expression patterns" value="baseline and differential"/>
</dbReference>
<dbReference type="GO" id="GO:0005743">
    <property type="term" value="C:mitochondrial inner membrane"/>
    <property type="evidence" value="ECO:0000304"/>
    <property type="project" value="Reactome"/>
</dbReference>
<dbReference type="GO" id="GO:0005762">
    <property type="term" value="C:mitochondrial large ribosomal subunit"/>
    <property type="evidence" value="ECO:0000314"/>
    <property type="project" value="UniProtKB"/>
</dbReference>
<dbReference type="GO" id="GO:0005761">
    <property type="term" value="C:mitochondrial ribosome"/>
    <property type="evidence" value="ECO:0000303"/>
    <property type="project" value="UniProtKB"/>
</dbReference>
<dbReference type="GO" id="GO:0005739">
    <property type="term" value="C:mitochondrion"/>
    <property type="evidence" value="ECO:0000314"/>
    <property type="project" value="UniProtKB"/>
</dbReference>
<dbReference type="GO" id="GO:0003735">
    <property type="term" value="F:structural constituent of ribosome"/>
    <property type="evidence" value="ECO:0000303"/>
    <property type="project" value="UniProtKB"/>
</dbReference>
<dbReference type="GO" id="GO:0032543">
    <property type="term" value="P:mitochondrial translation"/>
    <property type="evidence" value="ECO:0000303"/>
    <property type="project" value="ComplexPortal"/>
</dbReference>
<dbReference type="GO" id="GO:0006412">
    <property type="term" value="P:translation"/>
    <property type="evidence" value="ECO:0000303"/>
    <property type="project" value="UniProtKB"/>
</dbReference>
<dbReference type="FunFam" id="1.10.287.3980:FF:000001">
    <property type="entry name" value="Mitochondrial ribosomal protein L34"/>
    <property type="match status" value="1"/>
</dbReference>
<dbReference type="Gene3D" id="1.10.287.3980">
    <property type="match status" value="1"/>
</dbReference>
<dbReference type="InterPro" id="IPR000271">
    <property type="entry name" value="Ribosomal_bL34"/>
</dbReference>
<dbReference type="NCBIfam" id="TIGR01030">
    <property type="entry name" value="rpmH_bact"/>
    <property type="match status" value="1"/>
</dbReference>
<dbReference type="PANTHER" id="PTHR14503:SF4">
    <property type="entry name" value="LARGE RIBOSOMAL SUBUNIT PROTEIN BL34M"/>
    <property type="match status" value="1"/>
</dbReference>
<dbReference type="PANTHER" id="PTHR14503">
    <property type="entry name" value="MITOCHONDRIAL RIBOSOMAL PROTEIN 34 FAMILY MEMBER"/>
    <property type="match status" value="1"/>
</dbReference>
<dbReference type="Pfam" id="PF00468">
    <property type="entry name" value="Ribosomal_L34"/>
    <property type="match status" value="1"/>
</dbReference>